<name>COAE_STAAN</name>
<keyword id="KW-0067">ATP-binding</keyword>
<keyword id="KW-0173">Coenzyme A biosynthesis</keyword>
<keyword id="KW-0963">Cytoplasm</keyword>
<keyword id="KW-0418">Kinase</keyword>
<keyword id="KW-0547">Nucleotide-binding</keyword>
<keyword id="KW-0808">Transferase</keyword>
<comment type="function">
    <text evidence="1">Catalyzes the phosphorylation of the 3'-hydroxyl group of dephosphocoenzyme A to form coenzyme A.</text>
</comment>
<comment type="catalytic activity">
    <reaction evidence="1">
        <text>3'-dephospho-CoA + ATP = ADP + CoA + H(+)</text>
        <dbReference type="Rhea" id="RHEA:18245"/>
        <dbReference type="ChEBI" id="CHEBI:15378"/>
        <dbReference type="ChEBI" id="CHEBI:30616"/>
        <dbReference type="ChEBI" id="CHEBI:57287"/>
        <dbReference type="ChEBI" id="CHEBI:57328"/>
        <dbReference type="ChEBI" id="CHEBI:456216"/>
        <dbReference type="EC" id="2.7.1.24"/>
    </reaction>
</comment>
<comment type="pathway">
    <text evidence="1">Cofactor biosynthesis; coenzyme A biosynthesis; CoA from (R)-pantothenate: step 5/5.</text>
</comment>
<comment type="subcellular location">
    <subcellularLocation>
        <location evidence="1">Cytoplasm</location>
    </subcellularLocation>
</comment>
<comment type="similarity">
    <text evidence="1">Belongs to the CoaE family.</text>
</comment>
<organism>
    <name type="scientific">Staphylococcus aureus (strain N315)</name>
    <dbReference type="NCBI Taxonomy" id="158879"/>
    <lineage>
        <taxon>Bacteria</taxon>
        <taxon>Bacillati</taxon>
        <taxon>Bacillota</taxon>
        <taxon>Bacilli</taxon>
        <taxon>Bacillales</taxon>
        <taxon>Staphylococcaceae</taxon>
        <taxon>Staphylococcus</taxon>
    </lineage>
</organism>
<accession>P63831</accession>
<accession>Q99TH4</accession>
<reference key="1">
    <citation type="journal article" date="2001" name="Lancet">
        <title>Whole genome sequencing of meticillin-resistant Staphylococcus aureus.</title>
        <authorList>
            <person name="Kuroda M."/>
            <person name="Ohta T."/>
            <person name="Uchiyama I."/>
            <person name="Baba T."/>
            <person name="Yuzawa H."/>
            <person name="Kobayashi I."/>
            <person name="Cui L."/>
            <person name="Oguchi A."/>
            <person name="Aoki K."/>
            <person name="Nagai Y."/>
            <person name="Lian J.-Q."/>
            <person name="Ito T."/>
            <person name="Kanamori M."/>
            <person name="Matsumaru H."/>
            <person name="Maruyama A."/>
            <person name="Murakami H."/>
            <person name="Hosoyama A."/>
            <person name="Mizutani-Ui Y."/>
            <person name="Takahashi N.K."/>
            <person name="Sawano T."/>
            <person name="Inoue R."/>
            <person name="Kaito C."/>
            <person name="Sekimizu K."/>
            <person name="Hirakawa H."/>
            <person name="Kuhara S."/>
            <person name="Goto S."/>
            <person name="Yabuzaki J."/>
            <person name="Kanehisa M."/>
            <person name="Yamashita A."/>
            <person name="Oshima K."/>
            <person name="Furuya K."/>
            <person name="Yoshino C."/>
            <person name="Shiba T."/>
            <person name="Hattori M."/>
            <person name="Ogasawara N."/>
            <person name="Hayashi H."/>
            <person name="Hiramatsu K."/>
        </authorList>
    </citation>
    <scope>NUCLEOTIDE SEQUENCE [LARGE SCALE GENOMIC DNA]</scope>
    <source>
        <strain>N315</strain>
    </source>
</reference>
<reference key="2">
    <citation type="submission" date="2007-10" db="UniProtKB">
        <title>Shotgun proteomic analysis of total and membrane protein extracts of S. aureus strain N315.</title>
        <authorList>
            <person name="Vaezzadeh A.R."/>
            <person name="Deshusses J."/>
            <person name="Lescuyer P."/>
            <person name="Hochstrasser D.F."/>
        </authorList>
    </citation>
    <scope>IDENTIFICATION BY MASS SPECTROMETRY [LARGE SCALE ANALYSIS]</scope>
    <source>
        <strain>N315</strain>
    </source>
</reference>
<protein>
    <recommendedName>
        <fullName evidence="1">Dephospho-CoA kinase</fullName>
        <ecNumber evidence="1">2.7.1.24</ecNumber>
    </recommendedName>
    <alternativeName>
        <fullName evidence="1">Dephosphocoenzyme A kinase</fullName>
    </alternativeName>
</protein>
<evidence type="ECO:0000255" key="1">
    <source>
        <dbReference type="HAMAP-Rule" id="MF_00376"/>
    </source>
</evidence>
<gene>
    <name evidence="1" type="primary">coaE</name>
    <name type="ordered locus">SA1511</name>
</gene>
<sequence>MPKVIGLTGGIASGKSTVSELLSVFGFKVVDADKAAREAVKKGSKGLAQVREVFGDEAIDENGEMNRRYMGDLVFNHPEKRLELNAIIHPIVRDIMEEEKQEYLKQGYNVIMDIPLLFENELENTVDEVWVVYTSESIQMDRLMQRNNLSLEDAKARVYSQISIDKKSRMADHVIDNLGDKLELKQNLERLLEEEGYIEKPNYGEED</sequence>
<proteinExistence type="evidence at protein level"/>
<feature type="chain" id="PRO_0000172999" description="Dephospho-CoA kinase">
    <location>
        <begin position="1"/>
        <end position="207"/>
    </location>
</feature>
<feature type="domain" description="DPCK" evidence="1">
    <location>
        <begin position="4"/>
        <end position="203"/>
    </location>
</feature>
<feature type="binding site" evidence="1">
    <location>
        <begin position="12"/>
        <end position="17"/>
    </location>
    <ligand>
        <name>ATP</name>
        <dbReference type="ChEBI" id="CHEBI:30616"/>
    </ligand>
</feature>
<dbReference type="EC" id="2.7.1.24" evidence="1"/>
<dbReference type="EMBL" id="BA000018">
    <property type="protein sequence ID" value="BAB42778.1"/>
    <property type="molecule type" value="Genomic_DNA"/>
</dbReference>
<dbReference type="PIR" id="E89952">
    <property type="entry name" value="E89952"/>
</dbReference>
<dbReference type="RefSeq" id="WP_001127167.1">
    <property type="nucleotide sequence ID" value="NC_002745.2"/>
</dbReference>
<dbReference type="SMR" id="P63831"/>
<dbReference type="EnsemblBacteria" id="BAB42778">
    <property type="protein sequence ID" value="BAB42778"/>
    <property type="gene ID" value="BAB42778"/>
</dbReference>
<dbReference type="KEGG" id="sau:SA1511"/>
<dbReference type="HOGENOM" id="CLU_057180_0_0_9"/>
<dbReference type="UniPathway" id="UPA00241">
    <property type="reaction ID" value="UER00356"/>
</dbReference>
<dbReference type="GO" id="GO:0005737">
    <property type="term" value="C:cytoplasm"/>
    <property type="evidence" value="ECO:0007669"/>
    <property type="project" value="UniProtKB-SubCell"/>
</dbReference>
<dbReference type="GO" id="GO:0005524">
    <property type="term" value="F:ATP binding"/>
    <property type="evidence" value="ECO:0007669"/>
    <property type="project" value="UniProtKB-UniRule"/>
</dbReference>
<dbReference type="GO" id="GO:0004140">
    <property type="term" value="F:dephospho-CoA kinase activity"/>
    <property type="evidence" value="ECO:0007669"/>
    <property type="project" value="UniProtKB-UniRule"/>
</dbReference>
<dbReference type="GO" id="GO:0015937">
    <property type="term" value="P:coenzyme A biosynthetic process"/>
    <property type="evidence" value="ECO:0007669"/>
    <property type="project" value="UniProtKB-UniRule"/>
</dbReference>
<dbReference type="CDD" id="cd02022">
    <property type="entry name" value="DPCK"/>
    <property type="match status" value="1"/>
</dbReference>
<dbReference type="FunFam" id="3.40.50.300:FF:000991">
    <property type="entry name" value="Dephospho-CoA kinase"/>
    <property type="match status" value="1"/>
</dbReference>
<dbReference type="Gene3D" id="3.40.50.300">
    <property type="entry name" value="P-loop containing nucleotide triphosphate hydrolases"/>
    <property type="match status" value="1"/>
</dbReference>
<dbReference type="HAMAP" id="MF_00376">
    <property type="entry name" value="Dephospho_CoA_kinase"/>
    <property type="match status" value="1"/>
</dbReference>
<dbReference type="InterPro" id="IPR001977">
    <property type="entry name" value="Depp_CoAkinase"/>
</dbReference>
<dbReference type="InterPro" id="IPR027417">
    <property type="entry name" value="P-loop_NTPase"/>
</dbReference>
<dbReference type="NCBIfam" id="TIGR00152">
    <property type="entry name" value="dephospho-CoA kinase"/>
    <property type="match status" value="1"/>
</dbReference>
<dbReference type="PANTHER" id="PTHR10695:SF46">
    <property type="entry name" value="BIFUNCTIONAL COENZYME A SYNTHASE-RELATED"/>
    <property type="match status" value="1"/>
</dbReference>
<dbReference type="PANTHER" id="PTHR10695">
    <property type="entry name" value="DEPHOSPHO-COA KINASE-RELATED"/>
    <property type="match status" value="1"/>
</dbReference>
<dbReference type="Pfam" id="PF01121">
    <property type="entry name" value="CoaE"/>
    <property type="match status" value="1"/>
</dbReference>
<dbReference type="SUPFAM" id="SSF52540">
    <property type="entry name" value="P-loop containing nucleoside triphosphate hydrolases"/>
    <property type="match status" value="1"/>
</dbReference>
<dbReference type="PROSITE" id="PS51219">
    <property type="entry name" value="DPCK"/>
    <property type="match status" value="1"/>
</dbReference>